<proteinExistence type="inferred from homology"/>
<name>RS15_LEUMM</name>
<protein>
    <recommendedName>
        <fullName evidence="1">Small ribosomal subunit protein uS15</fullName>
    </recommendedName>
    <alternativeName>
        <fullName evidence="2">30S ribosomal protein S15</fullName>
    </alternativeName>
</protein>
<accession>Q03VU8</accession>
<sequence>MALTQERKNEIIKAYARHEGDTGSAEVQIAVLTADINELNTHMAAHKHDFHSQRGLMKKIGSRRNLLRYLRNTDIQRYRELIQRLGLRR</sequence>
<keyword id="KW-1185">Reference proteome</keyword>
<keyword id="KW-0687">Ribonucleoprotein</keyword>
<keyword id="KW-0689">Ribosomal protein</keyword>
<keyword id="KW-0694">RNA-binding</keyword>
<keyword id="KW-0699">rRNA-binding</keyword>
<comment type="function">
    <text evidence="1">One of the primary rRNA binding proteins, it binds directly to 16S rRNA where it helps nucleate assembly of the platform of the 30S subunit by binding and bridging several RNA helices of the 16S rRNA.</text>
</comment>
<comment type="function">
    <text evidence="1">Forms an intersubunit bridge (bridge B4) with the 23S rRNA of the 50S subunit in the ribosome.</text>
</comment>
<comment type="subunit">
    <text evidence="1">Part of the 30S ribosomal subunit. Forms a bridge to the 50S subunit in the 70S ribosome, contacting the 23S rRNA.</text>
</comment>
<comment type="similarity">
    <text evidence="1">Belongs to the universal ribosomal protein uS15 family.</text>
</comment>
<reference key="1">
    <citation type="journal article" date="2006" name="Proc. Natl. Acad. Sci. U.S.A.">
        <title>Comparative genomics of the lactic acid bacteria.</title>
        <authorList>
            <person name="Makarova K.S."/>
            <person name="Slesarev A."/>
            <person name="Wolf Y.I."/>
            <person name="Sorokin A."/>
            <person name="Mirkin B."/>
            <person name="Koonin E.V."/>
            <person name="Pavlov A."/>
            <person name="Pavlova N."/>
            <person name="Karamychev V."/>
            <person name="Polouchine N."/>
            <person name="Shakhova V."/>
            <person name="Grigoriev I."/>
            <person name="Lou Y."/>
            <person name="Rohksar D."/>
            <person name="Lucas S."/>
            <person name="Huang K."/>
            <person name="Goodstein D.M."/>
            <person name="Hawkins T."/>
            <person name="Plengvidhya V."/>
            <person name="Welker D."/>
            <person name="Hughes J."/>
            <person name="Goh Y."/>
            <person name="Benson A."/>
            <person name="Baldwin K."/>
            <person name="Lee J.-H."/>
            <person name="Diaz-Muniz I."/>
            <person name="Dosti B."/>
            <person name="Smeianov V."/>
            <person name="Wechter W."/>
            <person name="Barabote R."/>
            <person name="Lorca G."/>
            <person name="Altermann E."/>
            <person name="Barrangou R."/>
            <person name="Ganesan B."/>
            <person name="Xie Y."/>
            <person name="Rawsthorne H."/>
            <person name="Tamir D."/>
            <person name="Parker C."/>
            <person name="Breidt F."/>
            <person name="Broadbent J.R."/>
            <person name="Hutkins R."/>
            <person name="O'Sullivan D."/>
            <person name="Steele J."/>
            <person name="Unlu G."/>
            <person name="Saier M.H. Jr."/>
            <person name="Klaenhammer T."/>
            <person name="Richardson P."/>
            <person name="Kozyavkin S."/>
            <person name="Weimer B.C."/>
            <person name="Mills D.A."/>
        </authorList>
    </citation>
    <scope>NUCLEOTIDE SEQUENCE [LARGE SCALE GENOMIC DNA]</scope>
    <source>
        <strain>ATCC 8293 / DSM 20343 / BCRC 11652 / CCM 1803 / JCM 6124 / NCDO 523 / NBRC 100496 / NCIMB 8023 / NCTC 12954 / NRRL B-1118 / 37Y</strain>
    </source>
</reference>
<organism>
    <name type="scientific">Leuconostoc mesenteroides subsp. mesenteroides (strain ATCC 8293 / DSM 20343 / BCRC 11652 / CCM 1803 / JCM 6124 / NCDO 523 / NBRC 100496 / NCIMB 8023 / NCTC 12954 / NRRL B-1118 / 37Y)</name>
    <dbReference type="NCBI Taxonomy" id="203120"/>
    <lineage>
        <taxon>Bacteria</taxon>
        <taxon>Bacillati</taxon>
        <taxon>Bacillota</taxon>
        <taxon>Bacilli</taxon>
        <taxon>Lactobacillales</taxon>
        <taxon>Lactobacillaceae</taxon>
        <taxon>Leuconostoc</taxon>
    </lineage>
</organism>
<evidence type="ECO:0000255" key="1">
    <source>
        <dbReference type="HAMAP-Rule" id="MF_01343"/>
    </source>
</evidence>
<evidence type="ECO:0000305" key="2"/>
<dbReference type="EMBL" id="CP000414">
    <property type="protein sequence ID" value="ABJ62674.1"/>
    <property type="molecule type" value="Genomic_DNA"/>
</dbReference>
<dbReference type="RefSeq" id="WP_011680241.1">
    <property type="nucleotide sequence ID" value="NC_008531.1"/>
</dbReference>
<dbReference type="SMR" id="Q03VU8"/>
<dbReference type="EnsemblBacteria" id="ABJ62674">
    <property type="protein sequence ID" value="ABJ62674"/>
    <property type="gene ID" value="LEUM_1582"/>
</dbReference>
<dbReference type="GeneID" id="97503435"/>
<dbReference type="KEGG" id="lme:LEUM_1582"/>
<dbReference type="eggNOG" id="COG0184">
    <property type="taxonomic scope" value="Bacteria"/>
</dbReference>
<dbReference type="HOGENOM" id="CLU_148518_0_0_9"/>
<dbReference type="Proteomes" id="UP000000362">
    <property type="component" value="Chromosome"/>
</dbReference>
<dbReference type="GO" id="GO:0022627">
    <property type="term" value="C:cytosolic small ribosomal subunit"/>
    <property type="evidence" value="ECO:0007669"/>
    <property type="project" value="TreeGrafter"/>
</dbReference>
<dbReference type="GO" id="GO:0019843">
    <property type="term" value="F:rRNA binding"/>
    <property type="evidence" value="ECO:0007669"/>
    <property type="project" value="UniProtKB-UniRule"/>
</dbReference>
<dbReference type="GO" id="GO:0003735">
    <property type="term" value="F:structural constituent of ribosome"/>
    <property type="evidence" value="ECO:0007669"/>
    <property type="project" value="InterPro"/>
</dbReference>
<dbReference type="GO" id="GO:0006412">
    <property type="term" value="P:translation"/>
    <property type="evidence" value="ECO:0007669"/>
    <property type="project" value="UniProtKB-UniRule"/>
</dbReference>
<dbReference type="CDD" id="cd00353">
    <property type="entry name" value="Ribosomal_S15p_S13e"/>
    <property type="match status" value="1"/>
</dbReference>
<dbReference type="FunFam" id="1.10.287.10:FF:000002">
    <property type="entry name" value="30S ribosomal protein S15"/>
    <property type="match status" value="1"/>
</dbReference>
<dbReference type="Gene3D" id="6.10.250.3130">
    <property type="match status" value="1"/>
</dbReference>
<dbReference type="Gene3D" id="1.10.287.10">
    <property type="entry name" value="S15/NS1, RNA-binding"/>
    <property type="match status" value="1"/>
</dbReference>
<dbReference type="HAMAP" id="MF_01343_B">
    <property type="entry name" value="Ribosomal_uS15_B"/>
    <property type="match status" value="1"/>
</dbReference>
<dbReference type="InterPro" id="IPR000589">
    <property type="entry name" value="Ribosomal_uS15"/>
</dbReference>
<dbReference type="InterPro" id="IPR005290">
    <property type="entry name" value="Ribosomal_uS15_bac-type"/>
</dbReference>
<dbReference type="InterPro" id="IPR009068">
    <property type="entry name" value="uS15_NS1_RNA-bd_sf"/>
</dbReference>
<dbReference type="NCBIfam" id="TIGR00952">
    <property type="entry name" value="S15_bact"/>
    <property type="match status" value="1"/>
</dbReference>
<dbReference type="PANTHER" id="PTHR23321">
    <property type="entry name" value="RIBOSOMAL PROTEIN S15, BACTERIAL AND ORGANELLAR"/>
    <property type="match status" value="1"/>
</dbReference>
<dbReference type="PANTHER" id="PTHR23321:SF26">
    <property type="entry name" value="SMALL RIBOSOMAL SUBUNIT PROTEIN US15M"/>
    <property type="match status" value="1"/>
</dbReference>
<dbReference type="Pfam" id="PF00312">
    <property type="entry name" value="Ribosomal_S15"/>
    <property type="match status" value="1"/>
</dbReference>
<dbReference type="SMART" id="SM01387">
    <property type="entry name" value="Ribosomal_S15"/>
    <property type="match status" value="1"/>
</dbReference>
<dbReference type="SUPFAM" id="SSF47060">
    <property type="entry name" value="S15/NS1 RNA-binding domain"/>
    <property type="match status" value="1"/>
</dbReference>
<dbReference type="PROSITE" id="PS00362">
    <property type="entry name" value="RIBOSOMAL_S15"/>
    <property type="match status" value="1"/>
</dbReference>
<gene>
    <name evidence="1" type="primary">rpsO</name>
    <name type="ordered locus">LEUM_1582</name>
</gene>
<feature type="chain" id="PRO_1000054805" description="Small ribosomal subunit protein uS15">
    <location>
        <begin position="1"/>
        <end position="89"/>
    </location>
</feature>